<dbReference type="EMBL" id="CP000407">
    <property type="protein sequence ID" value="ABP90363.1"/>
    <property type="molecule type" value="Genomic_DNA"/>
</dbReference>
<dbReference type="SMR" id="A4VW74"/>
<dbReference type="STRING" id="391295.SSU05_1397"/>
<dbReference type="KEGG" id="ssu:SSU05_1397"/>
<dbReference type="eggNOG" id="COG1159">
    <property type="taxonomic scope" value="Bacteria"/>
</dbReference>
<dbReference type="HOGENOM" id="CLU_038009_1_0_9"/>
<dbReference type="GO" id="GO:0005829">
    <property type="term" value="C:cytosol"/>
    <property type="evidence" value="ECO:0007669"/>
    <property type="project" value="TreeGrafter"/>
</dbReference>
<dbReference type="GO" id="GO:0005886">
    <property type="term" value="C:plasma membrane"/>
    <property type="evidence" value="ECO:0007669"/>
    <property type="project" value="UniProtKB-SubCell"/>
</dbReference>
<dbReference type="GO" id="GO:0005525">
    <property type="term" value="F:GTP binding"/>
    <property type="evidence" value="ECO:0007669"/>
    <property type="project" value="UniProtKB-UniRule"/>
</dbReference>
<dbReference type="GO" id="GO:0003924">
    <property type="term" value="F:GTPase activity"/>
    <property type="evidence" value="ECO:0007669"/>
    <property type="project" value="UniProtKB-UniRule"/>
</dbReference>
<dbReference type="GO" id="GO:0043024">
    <property type="term" value="F:ribosomal small subunit binding"/>
    <property type="evidence" value="ECO:0007669"/>
    <property type="project" value="TreeGrafter"/>
</dbReference>
<dbReference type="GO" id="GO:0070181">
    <property type="term" value="F:small ribosomal subunit rRNA binding"/>
    <property type="evidence" value="ECO:0007669"/>
    <property type="project" value="UniProtKB-UniRule"/>
</dbReference>
<dbReference type="GO" id="GO:0000028">
    <property type="term" value="P:ribosomal small subunit assembly"/>
    <property type="evidence" value="ECO:0007669"/>
    <property type="project" value="TreeGrafter"/>
</dbReference>
<dbReference type="CDD" id="cd04163">
    <property type="entry name" value="Era"/>
    <property type="match status" value="1"/>
</dbReference>
<dbReference type="CDD" id="cd22534">
    <property type="entry name" value="KH-II_Era"/>
    <property type="match status" value="1"/>
</dbReference>
<dbReference type="FunFam" id="3.30.300.20:FF:000003">
    <property type="entry name" value="GTPase Era"/>
    <property type="match status" value="1"/>
</dbReference>
<dbReference type="FunFam" id="3.40.50.300:FF:000094">
    <property type="entry name" value="GTPase Era"/>
    <property type="match status" value="1"/>
</dbReference>
<dbReference type="Gene3D" id="3.30.300.20">
    <property type="match status" value="1"/>
</dbReference>
<dbReference type="Gene3D" id="3.40.50.300">
    <property type="entry name" value="P-loop containing nucleotide triphosphate hydrolases"/>
    <property type="match status" value="1"/>
</dbReference>
<dbReference type="HAMAP" id="MF_00367">
    <property type="entry name" value="GTPase_Era"/>
    <property type="match status" value="1"/>
</dbReference>
<dbReference type="InterPro" id="IPR030388">
    <property type="entry name" value="G_ERA_dom"/>
</dbReference>
<dbReference type="InterPro" id="IPR006073">
    <property type="entry name" value="GTP-bd"/>
</dbReference>
<dbReference type="InterPro" id="IPR005662">
    <property type="entry name" value="GTPase_Era-like"/>
</dbReference>
<dbReference type="InterPro" id="IPR015946">
    <property type="entry name" value="KH_dom-like_a/b"/>
</dbReference>
<dbReference type="InterPro" id="IPR004044">
    <property type="entry name" value="KH_dom_type_2"/>
</dbReference>
<dbReference type="InterPro" id="IPR009019">
    <property type="entry name" value="KH_sf_prok-type"/>
</dbReference>
<dbReference type="InterPro" id="IPR027417">
    <property type="entry name" value="P-loop_NTPase"/>
</dbReference>
<dbReference type="InterPro" id="IPR005225">
    <property type="entry name" value="Small_GTP-bd"/>
</dbReference>
<dbReference type="NCBIfam" id="TIGR00436">
    <property type="entry name" value="era"/>
    <property type="match status" value="1"/>
</dbReference>
<dbReference type="NCBIfam" id="NF000908">
    <property type="entry name" value="PRK00089.1"/>
    <property type="match status" value="1"/>
</dbReference>
<dbReference type="NCBIfam" id="TIGR00231">
    <property type="entry name" value="small_GTP"/>
    <property type="match status" value="1"/>
</dbReference>
<dbReference type="PANTHER" id="PTHR42698">
    <property type="entry name" value="GTPASE ERA"/>
    <property type="match status" value="1"/>
</dbReference>
<dbReference type="PANTHER" id="PTHR42698:SF1">
    <property type="entry name" value="GTPASE ERA, MITOCHONDRIAL"/>
    <property type="match status" value="1"/>
</dbReference>
<dbReference type="Pfam" id="PF07650">
    <property type="entry name" value="KH_2"/>
    <property type="match status" value="1"/>
</dbReference>
<dbReference type="Pfam" id="PF01926">
    <property type="entry name" value="MMR_HSR1"/>
    <property type="match status" value="1"/>
</dbReference>
<dbReference type="SUPFAM" id="SSF52540">
    <property type="entry name" value="P-loop containing nucleoside triphosphate hydrolases"/>
    <property type="match status" value="1"/>
</dbReference>
<dbReference type="SUPFAM" id="SSF54814">
    <property type="entry name" value="Prokaryotic type KH domain (KH-domain type II)"/>
    <property type="match status" value="1"/>
</dbReference>
<dbReference type="PROSITE" id="PS51713">
    <property type="entry name" value="G_ERA"/>
    <property type="match status" value="1"/>
</dbReference>
<dbReference type="PROSITE" id="PS50823">
    <property type="entry name" value="KH_TYPE_2"/>
    <property type="match status" value="1"/>
</dbReference>
<protein>
    <recommendedName>
        <fullName evidence="1">GTPase Era</fullName>
    </recommendedName>
</protein>
<comment type="function">
    <text evidence="1">An essential GTPase that binds both GDP and GTP, with rapid nucleotide exchange. Plays a role in 16S rRNA processing and 30S ribosomal subunit biogenesis and possibly also in cell cycle regulation and energy metabolism.</text>
</comment>
<comment type="subunit">
    <text evidence="1">Monomer.</text>
</comment>
<comment type="subcellular location">
    <subcellularLocation>
        <location>Cytoplasm</location>
    </subcellularLocation>
    <subcellularLocation>
        <location evidence="1">Cell membrane</location>
        <topology evidence="1">Peripheral membrane protein</topology>
    </subcellularLocation>
</comment>
<comment type="similarity">
    <text evidence="1 2">Belongs to the TRAFAC class TrmE-Era-EngA-EngB-Septin-like GTPase superfamily. Era GTPase family.</text>
</comment>
<feature type="chain" id="PRO_1000079759" description="GTPase Era">
    <location>
        <begin position="1"/>
        <end position="299"/>
    </location>
</feature>
<feature type="domain" description="Era-type G" evidence="2">
    <location>
        <begin position="4"/>
        <end position="171"/>
    </location>
</feature>
<feature type="domain" description="KH type-2" evidence="1">
    <location>
        <begin position="202"/>
        <end position="280"/>
    </location>
</feature>
<feature type="region of interest" description="G1" evidence="2">
    <location>
        <begin position="12"/>
        <end position="19"/>
    </location>
</feature>
<feature type="region of interest" description="G2" evidence="2">
    <location>
        <begin position="38"/>
        <end position="42"/>
    </location>
</feature>
<feature type="region of interest" description="G3" evidence="2">
    <location>
        <begin position="59"/>
        <end position="62"/>
    </location>
</feature>
<feature type="region of interest" description="G4" evidence="2">
    <location>
        <begin position="121"/>
        <end position="124"/>
    </location>
</feature>
<feature type="region of interest" description="G5" evidence="2">
    <location>
        <begin position="150"/>
        <end position="152"/>
    </location>
</feature>
<feature type="binding site" evidence="1">
    <location>
        <begin position="12"/>
        <end position="19"/>
    </location>
    <ligand>
        <name>GTP</name>
        <dbReference type="ChEBI" id="CHEBI:37565"/>
    </ligand>
</feature>
<feature type="binding site" evidence="1">
    <location>
        <begin position="59"/>
        <end position="63"/>
    </location>
    <ligand>
        <name>GTP</name>
        <dbReference type="ChEBI" id="CHEBI:37565"/>
    </ligand>
</feature>
<feature type="binding site" evidence="1">
    <location>
        <begin position="121"/>
        <end position="124"/>
    </location>
    <ligand>
        <name>GTP</name>
        <dbReference type="ChEBI" id="CHEBI:37565"/>
    </ligand>
</feature>
<keyword id="KW-1003">Cell membrane</keyword>
<keyword id="KW-0963">Cytoplasm</keyword>
<keyword id="KW-0342">GTP-binding</keyword>
<keyword id="KW-0472">Membrane</keyword>
<keyword id="KW-0547">Nucleotide-binding</keyword>
<keyword id="KW-0690">Ribosome biogenesis</keyword>
<keyword id="KW-0694">RNA-binding</keyword>
<keyword id="KW-0699">rRNA-binding</keyword>
<organism>
    <name type="scientific">Streptococcus suis (strain 05ZYH33)</name>
    <dbReference type="NCBI Taxonomy" id="391295"/>
    <lineage>
        <taxon>Bacteria</taxon>
        <taxon>Bacillati</taxon>
        <taxon>Bacillota</taxon>
        <taxon>Bacilli</taxon>
        <taxon>Lactobacillales</taxon>
        <taxon>Streptococcaceae</taxon>
        <taxon>Streptococcus</taxon>
    </lineage>
</organism>
<name>ERA_STRSY</name>
<reference key="1">
    <citation type="journal article" date="2007" name="PLoS ONE">
        <title>A glimpse of streptococcal toxic shock syndrome from comparative genomics of S. suis 2 Chinese isolates.</title>
        <authorList>
            <person name="Chen C."/>
            <person name="Tang J."/>
            <person name="Dong W."/>
            <person name="Wang C."/>
            <person name="Feng Y."/>
            <person name="Wang J."/>
            <person name="Zheng F."/>
            <person name="Pan X."/>
            <person name="Liu D."/>
            <person name="Li M."/>
            <person name="Song Y."/>
            <person name="Zhu X."/>
            <person name="Sun H."/>
            <person name="Feng T."/>
            <person name="Guo Z."/>
            <person name="Ju A."/>
            <person name="Ge J."/>
            <person name="Dong Y."/>
            <person name="Sun W."/>
            <person name="Jiang Y."/>
            <person name="Wang J."/>
            <person name="Yan J."/>
            <person name="Yang H."/>
            <person name="Wang X."/>
            <person name="Gao G.F."/>
            <person name="Yang R."/>
            <person name="Wang J."/>
            <person name="Yu J."/>
        </authorList>
    </citation>
    <scope>NUCLEOTIDE SEQUENCE [LARGE SCALE GENOMIC DNA]</scope>
    <source>
        <strain>05ZYH33</strain>
    </source>
</reference>
<gene>
    <name evidence="1" type="primary">era</name>
    <name type="ordered locus">SSU05_1397</name>
</gene>
<proteinExistence type="inferred from homology"/>
<evidence type="ECO:0000255" key="1">
    <source>
        <dbReference type="HAMAP-Rule" id="MF_00367"/>
    </source>
</evidence>
<evidence type="ECO:0000255" key="2">
    <source>
        <dbReference type="PROSITE-ProRule" id="PRU01050"/>
    </source>
</evidence>
<sequence length="299" mass="34429">MTFKSGFVAILGRPNVGKSTFLNYVMGQKIAIMSDKAQTTRNKIMGIYTTEEEQIVFIDTPGIHKPKTALGDFMVESAYSTLREVDTVLFMVPADEKRGKGDDMIMERLKQAKVPVILVVNKIDKVHPDQLLEQIDDFRQQMDFKEIVPISATQGNNVNRLMEILKENLDEGFQYFPADQITDHPERFLVSEMIREKVLHLTREEIPHSVAVVIESMKRDEFTDKVHIRATIMVERDSQKGIIIGKQGAMLKKIGSMARRDIELMLGDKVFLETWVKVKKNWRDKKLDLADFGYNEKEY</sequence>
<accession>A4VW74</accession>